<organism>
    <name type="scientific">Mus musculus</name>
    <name type="common">Mouse</name>
    <dbReference type="NCBI Taxonomy" id="10090"/>
    <lineage>
        <taxon>Eukaryota</taxon>
        <taxon>Metazoa</taxon>
        <taxon>Chordata</taxon>
        <taxon>Craniata</taxon>
        <taxon>Vertebrata</taxon>
        <taxon>Euteleostomi</taxon>
        <taxon>Mammalia</taxon>
        <taxon>Eutheria</taxon>
        <taxon>Euarchontoglires</taxon>
        <taxon>Glires</taxon>
        <taxon>Rodentia</taxon>
        <taxon>Myomorpha</taxon>
        <taxon>Muroidea</taxon>
        <taxon>Muridae</taxon>
        <taxon>Murinae</taxon>
        <taxon>Mus</taxon>
        <taxon>Mus</taxon>
    </lineage>
</organism>
<accession>P0DM65</accession>
<accession>S5WDD2</accession>
<name>BECN2_MOUSE</name>
<evidence type="ECO:0000250" key="1">
    <source>
        <dbReference type="UniProtKB" id="A8MW95"/>
    </source>
</evidence>
<evidence type="ECO:0000255" key="2"/>
<evidence type="ECO:0000269" key="3">
    <source>
    </source>
</evidence>
<evidence type="ECO:0000303" key="4">
    <source>
    </source>
</evidence>
<evidence type="ECO:0000305" key="5"/>
<evidence type="ECO:0000312" key="6">
    <source>
        <dbReference type="EMBL" id="AGS82805.1"/>
    </source>
</evidence>
<evidence type="ECO:0000312" key="7">
    <source>
        <dbReference type="MGI" id="MGI:2684950"/>
    </source>
</evidence>
<proteinExistence type="evidence at protein level"/>
<comment type="function">
    <text evidence="3">Involved in 2 distinct lysosomal degradation pathways: acts as a regulator of autophagy and as a regulator of G-protein coupled receptors turnover. Regulates degradation in lysosomes of a variety of G-protein coupled receptors via its interaction with GPRASP1/GASP1.</text>
</comment>
<comment type="subunit">
    <text evidence="1 3">Homodimer (via coiled-coil domain) (By similarity). Interacts (via coiled-coil domain) with ATG14 (via coiled-coil domain); this interaction is tighter than BECN2 self-association (PubMed:23954414). Interacts with AMBRA1, UVRAG and PIK3C3/VPS34; these interactions are not disrupted by starvation (PubMed:23954414). Does not interact with RUBCN. Interacts (via N-terminus) with GPRASP1/GASP1; the interaction is direct (PubMed:23954414).</text>
</comment>
<comment type="subcellular location">
    <subcellularLocation>
        <location evidence="5">Cytoplasm</location>
    </subcellularLocation>
</comment>
<comment type="tissue specificity">
    <text evidence="3">Expressed in brain, skeletal muscle, placenta, thymus and uterus. Expressed at a lower level in liver, testis, stomach, and 17-day-old embryos.</text>
</comment>
<comment type="disruption phenotype">
    <text evidence="3">Decreased embryonic viability: embryonic and postnatal survival rates of homozygous mutant mice are markedly lower. Heterozygous knockout mice show defects in autophagy, increased levels of Cnr1 receptor, elevated food intake, and obesity and insulin resistance.</text>
</comment>
<comment type="similarity">
    <text evidence="5">Belongs to the beclin family.</text>
</comment>
<gene>
    <name evidence="4 7" type="primary">Becn2</name>
</gene>
<sequence length="447" mass="50287">MSPALFLCQRCKEPLKLLQQQGGPLEVQHHANTPTEIPVSAESQVRTSGRPHSDGGRVSQGSALCTFTLLTSGGPDSEGGTTSQGNACCTFTLLGESASMRTMNTIQNTVLETFEILSDQKVVDHPLCVDCTDHLLMQLDDQLALLASDNQKYKSFQDRELLVSEEEREALHAELCAELSSLEQEEARLTQELEDLDGHHARVAAELRAAQAESKELYKQHEQHRVEYSVFKMEQLELMDQLSSVENQLTYALSQQYRLRQTNIFNATFTISDEGPLGVINNFRLGCLPGVRVGWTEISSAWGQTVLLLFSLSKIAGLQFQRYQLVPFGDHSYLKSLTGDGVLPLFSDGSHSVFLNNKFDCGMKAFLDCLQQFVEEIERDERCPCLPYRIHVKEGLMEDVWDSGECCSIRTHLNTEEEWSRALKFMLSDLKLILAWASLRFSRVQRP</sequence>
<dbReference type="EMBL" id="KF511582">
    <property type="protein sequence ID" value="AGS82805.1"/>
    <property type="molecule type" value="mRNA"/>
</dbReference>
<dbReference type="EMBL" id="GL456087">
    <property type="status" value="NOT_ANNOTATED_CDS"/>
    <property type="molecule type" value="Genomic_DNA"/>
</dbReference>
<dbReference type="CCDS" id="CCDS78757.1"/>
<dbReference type="RefSeq" id="NP_001277621.1">
    <property type="nucleotide sequence ID" value="NM_001290692.1"/>
</dbReference>
<dbReference type="SMR" id="P0DM65"/>
<dbReference type="BioGRID" id="230547">
    <property type="interactions" value="5"/>
</dbReference>
<dbReference type="FunCoup" id="P0DM65">
    <property type="interactions" value="3"/>
</dbReference>
<dbReference type="IntAct" id="P0DM65">
    <property type="interactions" value="6"/>
</dbReference>
<dbReference type="STRING" id="10090.ENSMUSP00000143887"/>
<dbReference type="PhosphoSitePlus" id="P0DM65"/>
<dbReference type="Antibodypedia" id="77840">
    <property type="antibodies" value="293 antibodies from 17 providers"/>
</dbReference>
<dbReference type="DNASU" id="226720"/>
<dbReference type="Ensembl" id="ENSMUST00000201297.2">
    <property type="protein sequence ID" value="ENSMUSP00000143887.2"/>
    <property type="gene ID" value="ENSMUSG00000104158.3"/>
</dbReference>
<dbReference type="GeneID" id="226720"/>
<dbReference type="KEGG" id="mmu:226720"/>
<dbReference type="UCSC" id="uc033fof.2">
    <property type="organism name" value="mouse"/>
</dbReference>
<dbReference type="AGR" id="MGI:2684950"/>
<dbReference type="CTD" id="441925"/>
<dbReference type="MGI" id="MGI:2684950">
    <property type="gene designation" value="Becn2"/>
</dbReference>
<dbReference type="VEuPathDB" id="HostDB:ENSMUSG00000104158"/>
<dbReference type="GeneTree" id="ENSGT00390000008164"/>
<dbReference type="InParanoid" id="P0DM65"/>
<dbReference type="OMA" id="INTAWGT"/>
<dbReference type="OrthoDB" id="20368at2759"/>
<dbReference type="PRO" id="PR:P0DM65"/>
<dbReference type="Proteomes" id="UP000000589">
    <property type="component" value="Chromosome 1"/>
</dbReference>
<dbReference type="RNAct" id="P0DM65">
    <property type="molecule type" value="protein"/>
</dbReference>
<dbReference type="Bgee" id="ENSMUSG00000104158">
    <property type="expression patterns" value="Expressed in blastoderm cell in morula and 7 other cell types or tissues"/>
</dbReference>
<dbReference type="ExpressionAtlas" id="P0DM65">
    <property type="expression patterns" value="baseline and differential"/>
</dbReference>
<dbReference type="GO" id="GO:0005737">
    <property type="term" value="C:cytoplasm"/>
    <property type="evidence" value="ECO:0007669"/>
    <property type="project" value="UniProtKB-SubCell"/>
</dbReference>
<dbReference type="GO" id="GO:0044877">
    <property type="term" value="F:protein-containing complex binding"/>
    <property type="evidence" value="ECO:0000314"/>
    <property type="project" value="MGI"/>
</dbReference>
<dbReference type="GO" id="GO:0006914">
    <property type="term" value="P:autophagy"/>
    <property type="evidence" value="ECO:0000315"/>
    <property type="project" value="UniProtKB"/>
</dbReference>
<dbReference type="GO" id="GO:0008333">
    <property type="term" value="P:endosome to lysosome transport"/>
    <property type="evidence" value="ECO:0000315"/>
    <property type="project" value="UniProtKB"/>
</dbReference>
<dbReference type="GO" id="GO:1990172">
    <property type="term" value="P:G protein-coupled receptor catabolic process"/>
    <property type="evidence" value="ECO:0000315"/>
    <property type="project" value="UniProtKB"/>
</dbReference>
<dbReference type="GO" id="GO:0042593">
    <property type="term" value="P:glucose homeostasis"/>
    <property type="evidence" value="ECO:0000316"/>
    <property type="project" value="MGI"/>
</dbReference>
<dbReference type="FunFam" id="1.10.418.40:FF:000001">
    <property type="entry name" value="beclin-1 isoform X1"/>
    <property type="match status" value="1"/>
</dbReference>
<dbReference type="Gene3D" id="6.10.250.3110">
    <property type="match status" value="1"/>
</dbReference>
<dbReference type="Gene3D" id="1.10.418.40">
    <property type="entry name" value="Autophagy protein 6/Beclin 1"/>
    <property type="match status" value="1"/>
</dbReference>
<dbReference type="InterPro" id="IPR007243">
    <property type="entry name" value="Atg6/Beclin"/>
</dbReference>
<dbReference type="InterPro" id="IPR038274">
    <property type="entry name" value="Atg6/Beclin_C_sf"/>
</dbReference>
<dbReference type="InterPro" id="IPR041691">
    <property type="entry name" value="Atg6/beclin_CC"/>
</dbReference>
<dbReference type="InterPro" id="IPR040455">
    <property type="entry name" value="Atg6_BARA"/>
</dbReference>
<dbReference type="PANTHER" id="PTHR12768">
    <property type="entry name" value="BECLIN 1"/>
    <property type="match status" value="1"/>
</dbReference>
<dbReference type="PANTHER" id="PTHR12768:SF5">
    <property type="entry name" value="BECLIN-2"/>
    <property type="match status" value="1"/>
</dbReference>
<dbReference type="Pfam" id="PF04111">
    <property type="entry name" value="APG6"/>
    <property type="match status" value="1"/>
</dbReference>
<dbReference type="Pfam" id="PF17675">
    <property type="entry name" value="APG6_N"/>
    <property type="match status" value="1"/>
</dbReference>
<keyword id="KW-0072">Autophagy</keyword>
<keyword id="KW-0175">Coiled coil</keyword>
<keyword id="KW-0963">Cytoplasm</keyword>
<keyword id="KW-1185">Reference proteome</keyword>
<protein>
    <recommendedName>
        <fullName evidence="4">Beclin-2</fullName>
    </recommendedName>
</protein>
<feature type="chain" id="PRO_0000424159" description="Beclin-2">
    <location>
        <begin position="1"/>
        <end position="447"/>
    </location>
</feature>
<feature type="region of interest" description="Required for homodimer formation" evidence="1">
    <location>
        <begin position="186"/>
        <end position="256"/>
    </location>
</feature>
<feature type="coiled-coil region" evidence="2">
    <location>
        <begin position="169"/>
        <end position="228"/>
    </location>
</feature>
<reference key="1">
    <citation type="journal article" date="2013" name="Cell">
        <title>Beclin 2 functions in autophagy, degradation of G protein-coupled receptors, and metabolism.</title>
        <authorList>
            <person name="He C."/>
            <person name="Wei Y."/>
            <person name="Sun K."/>
            <person name="Li B."/>
            <person name="Dong X."/>
            <person name="Zou Z."/>
            <person name="Liu Y."/>
            <person name="Kinch L.N."/>
            <person name="Khan S."/>
            <person name="Sinha S."/>
            <person name="Xavier R.J."/>
            <person name="Grishin N.V."/>
            <person name="Xiao G."/>
            <person name="Eskelinen E.L."/>
            <person name="Scherer P.E."/>
            <person name="Whistler J.L."/>
            <person name="Levine B."/>
        </authorList>
    </citation>
    <scope>NUCLEOTIDE SEQUENCE [MRNA]</scope>
    <scope>FUNCTION</scope>
    <scope>INTERACTION WITH ATG14; AMBRA1; GPRASP1; UVRAG AND PIK3C3</scope>
    <scope>TISSUE SPECIFICITY</scope>
    <scope>DISRUPTION PHENOTYPE</scope>
    <source>
        <strain evidence="6">C57BL/6J</strain>
    </source>
</reference>
<reference key="2">
    <citation type="journal article" date="2009" name="PLoS Biol.">
        <title>Lineage-specific biology revealed by a finished genome assembly of the mouse.</title>
        <authorList>
            <person name="Church D.M."/>
            <person name="Goodstadt L."/>
            <person name="Hillier L.W."/>
            <person name="Zody M.C."/>
            <person name="Goldstein S."/>
            <person name="She X."/>
            <person name="Bult C.J."/>
            <person name="Agarwala R."/>
            <person name="Cherry J.L."/>
            <person name="DiCuccio M."/>
            <person name="Hlavina W."/>
            <person name="Kapustin Y."/>
            <person name="Meric P."/>
            <person name="Maglott D."/>
            <person name="Birtle Z."/>
            <person name="Marques A.C."/>
            <person name="Graves T."/>
            <person name="Zhou S."/>
            <person name="Teague B."/>
            <person name="Potamousis K."/>
            <person name="Churas C."/>
            <person name="Place M."/>
            <person name="Herschleb J."/>
            <person name="Runnheim R."/>
            <person name="Forrest D."/>
            <person name="Amos-Landgraf J."/>
            <person name="Schwartz D.C."/>
            <person name="Cheng Z."/>
            <person name="Lindblad-Toh K."/>
            <person name="Eichler E.E."/>
            <person name="Ponting C.P."/>
        </authorList>
    </citation>
    <scope>NUCLEOTIDE SEQUENCE [LARGE SCALE GENOMIC DNA]</scope>
    <source>
        <strain>C57BL/6J</strain>
    </source>
</reference>